<keyword id="KW-0060">Ascorbate biosynthesis</keyword>
<keyword id="KW-0963">Cytoplasm</keyword>
<keyword id="KW-0408">Iron</keyword>
<keyword id="KW-0479">Metal-binding</keyword>
<keyword id="KW-0560">Oxidoreductase</keyword>
<keyword id="KW-1185">Reference proteome</keyword>
<gene>
    <name type="primary">MIOX2</name>
    <name type="ordered locus">At2g19800</name>
    <name type="ORF">F6F22.17</name>
</gene>
<sequence>MTILVEHFVPDSRVDEKKVIEERDNELVLDGGFVVPKSKETDAFDAPDMNFLGHSFRDYENGESERQQGVEEFYRMQHIHQTYDFVKKMRKEYGKLNKMEMSIWECCELLNNVVDESDPDLDEPQIQHLLQTAEAIRRDYPDEDWLHLTALIHDLGKVLLLPEFGGLPQWAVVGDTFPVGCTFDSANIHHKYFKGNHDINNPKYNTKNGVYTEGCGLDNVLMSWGHDDYMYLVAKKNGTTLPHAGLFIIRYHSFYPLHKAGAYTHLMNDEDRDDLKWLHVFNKYDLYSKSKVLVDVEQVKPYYISLINKYFPAKLKW</sequence>
<accession>O82200</accession>
<accession>Q8LCN3</accession>
<accession>Q94JX0</accession>
<protein>
    <recommendedName>
        <fullName evidence="4">Inositol oxygenase 2</fullName>
        <ecNumber evidence="2 6">1.13.99.1</ecNumber>
    </recommendedName>
    <alternativeName>
        <fullName>Myo-inositol oxygenase 2</fullName>
        <shortName>AtMIOX2</shortName>
        <shortName>MI oxygenase 2</shortName>
    </alternativeName>
</protein>
<reference key="1">
    <citation type="journal article" date="2005" name="Planta">
        <title>The inositol oxygenase gene family of Arabidopsis is involved in the biosynthesis of nucleotide sugar precursors for cell-wall matrix polysaccharides.</title>
        <authorList>
            <person name="Kanter U."/>
            <person name="Usadel B."/>
            <person name="Guerineau F."/>
            <person name="Li Y."/>
            <person name="Pauly M."/>
            <person name="Tenhaken R."/>
        </authorList>
    </citation>
    <scope>NUCLEOTIDE SEQUENCE [MRNA]</scope>
    <scope>TISSUE SPECIFICITY</scope>
    <scope>FUNCTION</scope>
    <scope>DISRUPTION PHENOTYPE</scope>
    <scope>CATALYTIC ACTIVITY</scope>
</reference>
<reference key="2">
    <citation type="journal article" date="1999" name="Nature">
        <title>Sequence and analysis of chromosome 2 of the plant Arabidopsis thaliana.</title>
        <authorList>
            <person name="Lin X."/>
            <person name="Kaul S."/>
            <person name="Rounsley S.D."/>
            <person name="Shea T.P."/>
            <person name="Benito M.-I."/>
            <person name="Town C.D."/>
            <person name="Fujii C.Y."/>
            <person name="Mason T.M."/>
            <person name="Bowman C.L."/>
            <person name="Barnstead M.E."/>
            <person name="Feldblyum T.V."/>
            <person name="Buell C.R."/>
            <person name="Ketchum K.A."/>
            <person name="Lee J.J."/>
            <person name="Ronning C.M."/>
            <person name="Koo H.L."/>
            <person name="Moffat K.S."/>
            <person name="Cronin L.A."/>
            <person name="Shen M."/>
            <person name="Pai G."/>
            <person name="Van Aken S."/>
            <person name="Umayam L."/>
            <person name="Tallon L.J."/>
            <person name="Gill J.E."/>
            <person name="Adams M.D."/>
            <person name="Carrera A.J."/>
            <person name="Creasy T.H."/>
            <person name="Goodman H.M."/>
            <person name="Somerville C.R."/>
            <person name="Copenhaver G.P."/>
            <person name="Preuss D."/>
            <person name="Nierman W.C."/>
            <person name="White O."/>
            <person name="Eisen J.A."/>
            <person name="Salzberg S.L."/>
            <person name="Fraser C.M."/>
            <person name="Venter J.C."/>
        </authorList>
    </citation>
    <scope>NUCLEOTIDE SEQUENCE [LARGE SCALE GENOMIC DNA]</scope>
    <source>
        <strain>cv. Columbia</strain>
    </source>
</reference>
<reference key="3">
    <citation type="journal article" date="2017" name="Plant J.">
        <title>Araport11: a complete reannotation of the Arabidopsis thaliana reference genome.</title>
        <authorList>
            <person name="Cheng C.Y."/>
            <person name="Krishnakumar V."/>
            <person name="Chan A.P."/>
            <person name="Thibaud-Nissen F."/>
            <person name="Schobel S."/>
            <person name="Town C.D."/>
        </authorList>
    </citation>
    <scope>GENOME REANNOTATION</scope>
    <source>
        <strain>cv. Columbia</strain>
    </source>
</reference>
<reference key="4">
    <citation type="submission" date="2002-03" db="EMBL/GenBank/DDBJ databases">
        <title>Full-length cDNA from Arabidopsis thaliana.</title>
        <authorList>
            <person name="Brover V.V."/>
            <person name="Troukhan M.E."/>
            <person name="Alexandrov N.A."/>
            <person name="Lu Y.-P."/>
            <person name="Flavell R.B."/>
            <person name="Feldmann K.A."/>
        </authorList>
    </citation>
    <scope>NUCLEOTIDE SEQUENCE [LARGE SCALE MRNA]</scope>
</reference>
<reference key="5">
    <citation type="journal article" date="2003" name="Science">
        <title>Empirical analysis of transcriptional activity in the Arabidopsis genome.</title>
        <authorList>
            <person name="Yamada K."/>
            <person name="Lim J."/>
            <person name="Dale J.M."/>
            <person name="Chen H."/>
            <person name="Shinn P."/>
            <person name="Palm C.J."/>
            <person name="Southwick A.M."/>
            <person name="Wu H.C."/>
            <person name="Kim C.J."/>
            <person name="Nguyen M."/>
            <person name="Pham P.K."/>
            <person name="Cheuk R.F."/>
            <person name="Karlin-Newmann G."/>
            <person name="Liu S.X."/>
            <person name="Lam B."/>
            <person name="Sakano H."/>
            <person name="Wu T."/>
            <person name="Yu G."/>
            <person name="Miranda M."/>
            <person name="Quach H.L."/>
            <person name="Tripp M."/>
            <person name="Chang C.H."/>
            <person name="Lee J.M."/>
            <person name="Toriumi M.J."/>
            <person name="Chan M.M."/>
            <person name="Tang C.C."/>
            <person name="Onodera C.S."/>
            <person name="Deng J.M."/>
            <person name="Akiyama K."/>
            <person name="Ansari Y."/>
            <person name="Arakawa T."/>
            <person name="Banh J."/>
            <person name="Banno F."/>
            <person name="Bowser L."/>
            <person name="Brooks S.Y."/>
            <person name="Carninci P."/>
            <person name="Chao Q."/>
            <person name="Choy N."/>
            <person name="Enju A."/>
            <person name="Goldsmith A.D."/>
            <person name="Gurjal M."/>
            <person name="Hansen N.F."/>
            <person name="Hayashizaki Y."/>
            <person name="Johnson-Hopson C."/>
            <person name="Hsuan V.W."/>
            <person name="Iida K."/>
            <person name="Karnes M."/>
            <person name="Khan S."/>
            <person name="Koesema E."/>
            <person name="Ishida J."/>
            <person name="Jiang P.X."/>
            <person name="Jones T."/>
            <person name="Kawai J."/>
            <person name="Kamiya A."/>
            <person name="Meyers C."/>
            <person name="Nakajima M."/>
            <person name="Narusaka M."/>
            <person name="Seki M."/>
            <person name="Sakurai T."/>
            <person name="Satou M."/>
            <person name="Tamse R."/>
            <person name="Vaysberg M."/>
            <person name="Wallender E.K."/>
            <person name="Wong C."/>
            <person name="Yamamura Y."/>
            <person name="Yuan S."/>
            <person name="Shinozaki K."/>
            <person name="Davis R.W."/>
            <person name="Theologis A."/>
            <person name="Ecker J.R."/>
        </authorList>
    </citation>
    <scope>NUCLEOTIDE SEQUENCE [LARGE SCALE MRNA] OF 76-317</scope>
    <source>
        <strain>cv. Columbia</strain>
    </source>
</reference>
<evidence type="ECO:0000250" key="1"/>
<evidence type="ECO:0000250" key="2">
    <source>
        <dbReference type="UniProtKB" id="Q8H1S0"/>
    </source>
</evidence>
<evidence type="ECO:0000269" key="3">
    <source>
    </source>
</evidence>
<evidence type="ECO:0000303" key="4">
    <source>
    </source>
</evidence>
<evidence type="ECO:0000305" key="5"/>
<evidence type="ECO:0000305" key="6">
    <source>
    </source>
</evidence>
<dbReference type="EC" id="1.13.99.1" evidence="2 6"/>
<dbReference type="EMBL" id="AC005169">
    <property type="protein sequence ID" value="AAC62136.2"/>
    <property type="molecule type" value="Genomic_DNA"/>
</dbReference>
<dbReference type="EMBL" id="CP002685">
    <property type="protein sequence ID" value="AEC06927.1"/>
    <property type="molecule type" value="Genomic_DNA"/>
</dbReference>
<dbReference type="EMBL" id="AY086497">
    <property type="protein sequence ID" value="AAM63498.1"/>
    <property type="molecule type" value="mRNA"/>
</dbReference>
<dbReference type="EMBL" id="AF370587">
    <property type="protein sequence ID" value="AAK43906.1"/>
    <property type="molecule type" value="mRNA"/>
</dbReference>
<dbReference type="PIR" id="C84581">
    <property type="entry name" value="C84581"/>
</dbReference>
<dbReference type="RefSeq" id="NP_565459.1">
    <property type="nucleotide sequence ID" value="NM_127538.4"/>
</dbReference>
<dbReference type="SMR" id="O82200"/>
<dbReference type="FunCoup" id="O82200">
    <property type="interactions" value="245"/>
</dbReference>
<dbReference type="STRING" id="3702.O82200"/>
<dbReference type="PaxDb" id="3702-AT2G19800.1"/>
<dbReference type="ProteomicsDB" id="250711"/>
<dbReference type="EnsemblPlants" id="AT2G19800.1">
    <property type="protein sequence ID" value="AT2G19800.1"/>
    <property type="gene ID" value="AT2G19800"/>
</dbReference>
<dbReference type="GeneID" id="816499"/>
<dbReference type="Gramene" id="AT2G19800.1">
    <property type="protein sequence ID" value="AT2G19800.1"/>
    <property type="gene ID" value="AT2G19800"/>
</dbReference>
<dbReference type="KEGG" id="ath:AT2G19800"/>
<dbReference type="Araport" id="AT2G19800"/>
<dbReference type="TAIR" id="AT2G19800">
    <property type="gene designation" value="MIOX2"/>
</dbReference>
<dbReference type="eggNOG" id="KOG1573">
    <property type="taxonomic scope" value="Eukaryota"/>
</dbReference>
<dbReference type="HOGENOM" id="CLU_050259_2_0_1"/>
<dbReference type="InParanoid" id="O82200"/>
<dbReference type="OMA" id="MVPQTNA"/>
<dbReference type="OrthoDB" id="5151075at2759"/>
<dbReference type="PhylomeDB" id="O82200"/>
<dbReference type="BRENDA" id="1.13.99.1">
    <property type="organism ID" value="399"/>
</dbReference>
<dbReference type="UniPathway" id="UPA00111">
    <property type="reaction ID" value="UER00527"/>
</dbReference>
<dbReference type="PRO" id="PR:O82200"/>
<dbReference type="Proteomes" id="UP000006548">
    <property type="component" value="Chromosome 2"/>
</dbReference>
<dbReference type="ExpressionAtlas" id="O82200">
    <property type="expression patterns" value="baseline and differential"/>
</dbReference>
<dbReference type="GO" id="GO:0005737">
    <property type="term" value="C:cytoplasm"/>
    <property type="evidence" value="ECO:0007669"/>
    <property type="project" value="UniProtKB-SubCell"/>
</dbReference>
<dbReference type="GO" id="GO:0050113">
    <property type="term" value="F:inositol oxygenase activity"/>
    <property type="evidence" value="ECO:0000315"/>
    <property type="project" value="TAIR"/>
</dbReference>
<dbReference type="GO" id="GO:0005506">
    <property type="term" value="F:iron ion binding"/>
    <property type="evidence" value="ECO:0007669"/>
    <property type="project" value="InterPro"/>
</dbReference>
<dbReference type="GO" id="GO:0019310">
    <property type="term" value="P:inositol catabolic process"/>
    <property type="evidence" value="ECO:0007669"/>
    <property type="project" value="InterPro"/>
</dbReference>
<dbReference type="GO" id="GO:0019853">
    <property type="term" value="P:L-ascorbic acid biosynthetic process"/>
    <property type="evidence" value="ECO:0007669"/>
    <property type="project" value="UniProtKB-KW"/>
</dbReference>
<dbReference type="InterPro" id="IPR007828">
    <property type="entry name" value="Inositol_oxygenase"/>
</dbReference>
<dbReference type="PANTHER" id="PTHR12588:SF14">
    <property type="entry name" value="INOSITOL OXYGENASE 2"/>
    <property type="match status" value="1"/>
</dbReference>
<dbReference type="PANTHER" id="PTHR12588">
    <property type="entry name" value="MYOINOSITOL OXYGENASE"/>
    <property type="match status" value="1"/>
</dbReference>
<dbReference type="Pfam" id="PF05153">
    <property type="entry name" value="MIOX"/>
    <property type="match status" value="1"/>
</dbReference>
<dbReference type="SUPFAM" id="SSF109604">
    <property type="entry name" value="HD-domain/PDEase-like"/>
    <property type="match status" value="1"/>
</dbReference>
<proteinExistence type="evidence at protein level"/>
<name>MIOX2_ARATH</name>
<feature type="chain" id="PRO_0000079155" description="Inositol oxygenase 2">
    <location>
        <begin position="1"/>
        <end position="317"/>
    </location>
</feature>
<feature type="binding site" evidence="1">
    <location>
        <position position="57"/>
    </location>
    <ligand>
        <name>substrate</name>
    </ligand>
</feature>
<feature type="binding site" evidence="1">
    <location>
        <begin position="115"/>
        <end position="117"/>
    </location>
    <ligand>
        <name>substrate</name>
    </ligand>
</feature>
<feature type="binding site" evidence="1">
    <location>
        <position position="128"/>
    </location>
    <ligand>
        <name>Fe cation</name>
        <dbReference type="ChEBI" id="CHEBI:24875"/>
        <label>1</label>
    </ligand>
</feature>
<feature type="binding site" evidence="1">
    <location>
        <position position="153"/>
    </location>
    <ligand>
        <name>Fe cation</name>
        <dbReference type="ChEBI" id="CHEBI:24875"/>
        <label>1</label>
    </ligand>
</feature>
<feature type="binding site" evidence="1">
    <location>
        <position position="154"/>
    </location>
    <ligand>
        <name>Fe cation</name>
        <dbReference type="ChEBI" id="CHEBI:24875"/>
        <label>1</label>
    </ligand>
</feature>
<feature type="binding site" evidence="1">
    <location>
        <position position="154"/>
    </location>
    <ligand>
        <name>Fe cation</name>
        <dbReference type="ChEBI" id="CHEBI:24875"/>
        <label>2</label>
    </ligand>
</feature>
<feature type="binding site" evidence="1">
    <location>
        <position position="157"/>
    </location>
    <ligand>
        <name>substrate</name>
    </ligand>
</feature>
<feature type="binding site" evidence="1">
    <location>
        <begin position="174"/>
        <end position="175"/>
    </location>
    <ligand>
        <name>substrate</name>
    </ligand>
</feature>
<feature type="binding site" evidence="1">
    <location>
        <position position="226"/>
    </location>
    <ligand>
        <name>Fe cation</name>
        <dbReference type="ChEBI" id="CHEBI:24875"/>
        <label>2</label>
    </ligand>
</feature>
<feature type="binding site" evidence="1">
    <location>
        <begin position="252"/>
        <end position="253"/>
    </location>
    <ligand>
        <name>substrate</name>
    </ligand>
</feature>
<feature type="binding site" evidence="1">
    <location>
        <position position="252"/>
    </location>
    <ligand>
        <name>Fe cation</name>
        <dbReference type="ChEBI" id="CHEBI:24875"/>
        <label>2</label>
    </ligand>
</feature>
<feature type="binding site" evidence="1">
    <location>
        <position position="285"/>
    </location>
    <ligand>
        <name>Fe cation</name>
        <dbReference type="ChEBI" id="CHEBI:24875"/>
        <label>1</label>
    </ligand>
</feature>
<feature type="sequence conflict" description="In Ref. 4; AAM63498." evidence="5" ref="4">
    <original>G</original>
    <variation>D</variation>
    <location>
        <position position="62"/>
    </location>
</feature>
<organism>
    <name type="scientific">Arabidopsis thaliana</name>
    <name type="common">Mouse-ear cress</name>
    <dbReference type="NCBI Taxonomy" id="3702"/>
    <lineage>
        <taxon>Eukaryota</taxon>
        <taxon>Viridiplantae</taxon>
        <taxon>Streptophyta</taxon>
        <taxon>Embryophyta</taxon>
        <taxon>Tracheophyta</taxon>
        <taxon>Spermatophyta</taxon>
        <taxon>Magnoliopsida</taxon>
        <taxon>eudicotyledons</taxon>
        <taxon>Gunneridae</taxon>
        <taxon>Pentapetalae</taxon>
        <taxon>rosids</taxon>
        <taxon>malvids</taxon>
        <taxon>Brassicales</taxon>
        <taxon>Brassicaceae</taxon>
        <taxon>Camelineae</taxon>
        <taxon>Arabidopsis</taxon>
    </lineage>
</organism>
<comment type="function">
    <text evidence="6">Involved in the biosynthesis of UDP-glucuronic acid (UDP-GlcA), providing nucleotide sugars for cell-wall polymers. May be also involved in plant ascorbate biosynthesis.</text>
</comment>
<comment type="catalytic activity">
    <reaction evidence="2 6">
        <text>myo-inositol + O2 = D-glucuronate + H2O + H(+)</text>
        <dbReference type="Rhea" id="RHEA:23696"/>
        <dbReference type="ChEBI" id="CHEBI:15377"/>
        <dbReference type="ChEBI" id="CHEBI:15378"/>
        <dbReference type="ChEBI" id="CHEBI:15379"/>
        <dbReference type="ChEBI" id="CHEBI:17268"/>
        <dbReference type="ChEBI" id="CHEBI:58720"/>
        <dbReference type="EC" id="1.13.99.1"/>
    </reaction>
</comment>
<comment type="cofactor">
    <cofactor evidence="1">
        <name>Fe cation</name>
        <dbReference type="ChEBI" id="CHEBI:24875"/>
    </cofactor>
    <text evidence="1">Binds 2 iron ions per subunit.</text>
</comment>
<comment type="pathway">
    <text>Polyol metabolism; myo-inositol degradation into D-glucuronate; D-glucuronate from myo-inositol: step 1/1.</text>
</comment>
<comment type="subcellular location">
    <subcellularLocation>
        <location evidence="5">Cytoplasm</location>
    </subcellularLocation>
</comment>
<comment type="tissue specificity">
    <text evidence="3">Expressed mainly in roots, stems, flowers and siliques. Low expression in leaves.</text>
</comment>
<comment type="disruption phenotype">
    <text evidence="3">Incorporation of the inositol pathway-derived monosaccharides is strongly reduced in knockout AtMIOX2 seedling walls.</text>
</comment>
<comment type="similarity">
    <text evidence="5">Belongs to the myo-inositol oxygenase family.</text>
</comment>